<name>RLMH_MARMM</name>
<keyword id="KW-0963">Cytoplasm</keyword>
<keyword id="KW-0489">Methyltransferase</keyword>
<keyword id="KW-1185">Reference proteome</keyword>
<keyword id="KW-0698">rRNA processing</keyword>
<keyword id="KW-0949">S-adenosyl-L-methionine</keyword>
<keyword id="KW-0808">Transferase</keyword>
<sequence length="156" mass="17011">MRLRVAALGRIKSGPERTLVDDYLDRGTATGRAIGLGPFAESEIDTRSLKSSSDESRALAAGLDPGARIVLLDERGKALNSRQLARQIGQWRDEGCREAVFCIGGADGHDRSQLPQPDLMLSFGPAVFPHKLVRVMLAEQLYRAVSILAGTPYHRD</sequence>
<reference key="1">
    <citation type="submission" date="2006-08" db="EMBL/GenBank/DDBJ databases">
        <title>Complete sequence of Maricaulis maris MCS10.</title>
        <authorList>
            <consortium name="US DOE Joint Genome Institute"/>
            <person name="Copeland A."/>
            <person name="Lucas S."/>
            <person name="Lapidus A."/>
            <person name="Barry K."/>
            <person name="Detter J.C."/>
            <person name="Glavina del Rio T."/>
            <person name="Hammon N."/>
            <person name="Israni S."/>
            <person name="Dalin E."/>
            <person name="Tice H."/>
            <person name="Pitluck S."/>
            <person name="Saunders E."/>
            <person name="Brettin T."/>
            <person name="Bruce D."/>
            <person name="Han C."/>
            <person name="Tapia R."/>
            <person name="Gilna P."/>
            <person name="Schmutz J."/>
            <person name="Larimer F."/>
            <person name="Land M."/>
            <person name="Hauser L."/>
            <person name="Kyrpides N."/>
            <person name="Mikhailova N."/>
            <person name="Viollier P."/>
            <person name="Stephens C."/>
            <person name="Richardson P."/>
        </authorList>
    </citation>
    <scope>NUCLEOTIDE SEQUENCE [LARGE SCALE GENOMIC DNA]</scope>
    <source>
        <strain>MCS10</strain>
    </source>
</reference>
<proteinExistence type="inferred from homology"/>
<dbReference type="EC" id="2.1.1.177" evidence="1"/>
<dbReference type="EMBL" id="CP000449">
    <property type="protein sequence ID" value="ABI67076.1"/>
    <property type="molecule type" value="Genomic_DNA"/>
</dbReference>
<dbReference type="RefSeq" id="WP_011644720.1">
    <property type="nucleotide sequence ID" value="NC_008347.1"/>
</dbReference>
<dbReference type="SMR" id="Q0AKW7"/>
<dbReference type="STRING" id="394221.Mmar10_2794"/>
<dbReference type="KEGG" id="mmr:Mmar10_2794"/>
<dbReference type="eggNOG" id="COG1576">
    <property type="taxonomic scope" value="Bacteria"/>
</dbReference>
<dbReference type="HOGENOM" id="CLU_100552_1_1_5"/>
<dbReference type="OrthoDB" id="9806643at2"/>
<dbReference type="Proteomes" id="UP000001964">
    <property type="component" value="Chromosome"/>
</dbReference>
<dbReference type="GO" id="GO:0005737">
    <property type="term" value="C:cytoplasm"/>
    <property type="evidence" value="ECO:0007669"/>
    <property type="project" value="UniProtKB-SubCell"/>
</dbReference>
<dbReference type="GO" id="GO:0070038">
    <property type="term" value="F:rRNA (pseudouridine-N3-)-methyltransferase activity"/>
    <property type="evidence" value="ECO:0007669"/>
    <property type="project" value="UniProtKB-UniRule"/>
</dbReference>
<dbReference type="CDD" id="cd18081">
    <property type="entry name" value="RlmH-like"/>
    <property type="match status" value="1"/>
</dbReference>
<dbReference type="Gene3D" id="3.40.1280.10">
    <property type="match status" value="1"/>
</dbReference>
<dbReference type="HAMAP" id="MF_00658">
    <property type="entry name" value="23SrRNA_methyltr_H"/>
    <property type="match status" value="1"/>
</dbReference>
<dbReference type="InterPro" id="IPR029028">
    <property type="entry name" value="Alpha/beta_knot_MTases"/>
</dbReference>
<dbReference type="InterPro" id="IPR003742">
    <property type="entry name" value="RlmH-like"/>
</dbReference>
<dbReference type="InterPro" id="IPR029026">
    <property type="entry name" value="tRNA_m1G_MTases_N"/>
</dbReference>
<dbReference type="NCBIfam" id="NF000989">
    <property type="entry name" value="PRK00103.2-3"/>
    <property type="match status" value="1"/>
</dbReference>
<dbReference type="PANTHER" id="PTHR33603">
    <property type="entry name" value="METHYLTRANSFERASE"/>
    <property type="match status" value="1"/>
</dbReference>
<dbReference type="PANTHER" id="PTHR33603:SF1">
    <property type="entry name" value="RIBOSOMAL RNA LARGE SUBUNIT METHYLTRANSFERASE H"/>
    <property type="match status" value="1"/>
</dbReference>
<dbReference type="Pfam" id="PF02590">
    <property type="entry name" value="SPOUT_MTase"/>
    <property type="match status" value="1"/>
</dbReference>
<dbReference type="PIRSF" id="PIRSF004505">
    <property type="entry name" value="MT_bac"/>
    <property type="match status" value="1"/>
</dbReference>
<dbReference type="SUPFAM" id="SSF75217">
    <property type="entry name" value="alpha/beta knot"/>
    <property type="match status" value="1"/>
</dbReference>
<accession>Q0AKW7</accession>
<evidence type="ECO:0000255" key="1">
    <source>
        <dbReference type="HAMAP-Rule" id="MF_00658"/>
    </source>
</evidence>
<organism>
    <name type="scientific">Maricaulis maris (strain MCS10)</name>
    <name type="common">Caulobacter maris</name>
    <dbReference type="NCBI Taxonomy" id="394221"/>
    <lineage>
        <taxon>Bacteria</taxon>
        <taxon>Pseudomonadati</taxon>
        <taxon>Pseudomonadota</taxon>
        <taxon>Alphaproteobacteria</taxon>
        <taxon>Maricaulales</taxon>
        <taxon>Maricaulaceae</taxon>
        <taxon>Maricaulis</taxon>
    </lineage>
</organism>
<protein>
    <recommendedName>
        <fullName evidence="1">Ribosomal RNA large subunit methyltransferase H</fullName>
        <ecNumber evidence="1">2.1.1.177</ecNumber>
    </recommendedName>
    <alternativeName>
        <fullName evidence="1">23S rRNA (pseudouridine1915-N3)-methyltransferase</fullName>
    </alternativeName>
    <alternativeName>
        <fullName evidence="1">23S rRNA m3Psi1915 methyltransferase</fullName>
    </alternativeName>
    <alternativeName>
        <fullName evidence="1">rRNA (pseudouridine-N3-)-methyltransferase RlmH</fullName>
    </alternativeName>
</protein>
<comment type="function">
    <text evidence="1">Specifically methylates the pseudouridine at position 1915 (m3Psi1915) in 23S rRNA.</text>
</comment>
<comment type="catalytic activity">
    <reaction evidence="1">
        <text>pseudouridine(1915) in 23S rRNA + S-adenosyl-L-methionine = N(3)-methylpseudouridine(1915) in 23S rRNA + S-adenosyl-L-homocysteine + H(+)</text>
        <dbReference type="Rhea" id="RHEA:42752"/>
        <dbReference type="Rhea" id="RHEA-COMP:10221"/>
        <dbReference type="Rhea" id="RHEA-COMP:10222"/>
        <dbReference type="ChEBI" id="CHEBI:15378"/>
        <dbReference type="ChEBI" id="CHEBI:57856"/>
        <dbReference type="ChEBI" id="CHEBI:59789"/>
        <dbReference type="ChEBI" id="CHEBI:65314"/>
        <dbReference type="ChEBI" id="CHEBI:74486"/>
        <dbReference type="EC" id="2.1.1.177"/>
    </reaction>
</comment>
<comment type="subunit">
    <text evidence="1">Homodimer.</text>
</comment>
<comment type="subcellular location">
    <subcellularLocation>
        <location evidence="1">Cytoplasm</location>
    </subcellularLocation>
</comment>
<comment type="similarity">
    <text evidence="1">Belongs to the RNA methyltransferase RlmH family.</text>
</comment>
<feature type="chain" id="PRO_0000260568" description="Ribosomal RNA large subunit methyltransferase H">
    <location>
        <begin position="1"/>
        <end position="156"/>
    </location>
</feature>
<feature type="binding site" evidence="1">
    <location>
        <position position="72"/>
    </location>
    <ligand>
        <name>S-adenosyl-L-methionine</name>
        <dbReference type="ChEBI" id="CHEBI:59789"/>
    </ligand>
</feature>
<feature type="binding site" evidence="1">
    <location>
        <position position="104"/>
    </location>
    <ligand>
        <name>S-adenosyl-L-methionine</name>
        <dbReference type="ChEBI" id="CHEBI:59789"/>
    </ligand>
</feature>
<gene>
    <name evidence="1" type="primary">rlmH</name>
    <name type="ordered locus">Mmar10_2794</name>
</gene>